<sequence>MQCALYDAGRCRSCQWITQPIPEQLSAKTADLKNLLADFPVEEWCAPVSGPEQGFRNKAKMVVSGSVEKTLLGMLHRDGTPEDLCDCPLYPASFAPVFAALKPFIARAGLTPYNVARKRGELKYILLTESQSDGGMMLRFVLRSDTKLAQLRKALPWLHEQLPQLKVITVNIQPVHMAIMEGETEIYLTEQQALAERFNDVPLWIRPQSFFQTNPAVASQLYATARDWVRQLPVKHMWDLFCGVGGFGLHCATPDMQLTGIEIAPEAIACAKQSAAELGLTRLQFQALDSTQFATAQGEVPELVLVNPPRRGIGKPLCDYLSTMAPRFIIYSSCNAQTMAKDIRELPGYRIERVQLFDMFPHTAHYEVLTLLVKQ</sequence>
<proteinExistence type="inferred from homology"/>
<dbReference type="EC" id="2.1.1.189" evidence="1"/>
<dbReference type="EMBL" id="AE005674">
    <property type="protein sequence ID" value="AAN42446.1"/>
    <property type="molecule type" value="Genomic_DNA"/>
</dbReference>
<dbReference type="EMBL" id="AE014073">
    <property type="protein sequence ID" value="AAP16318.1"/>
    <property type="molecule type" value="Genomic_DNA"/>
</dbReference>
<dbReference type="RefSeq" id="NP_706739.1">
    <property type="nucleotide sequence ID" value="NC_004337.2"/>
</dbReference>
<dbReference type="RefSeq" id="WP_001149748.1">
    <property type="nucleotide sequence ID" value="NZ_WPGW01000056.1"/>
</dbReference>
<dbReference type="SMR" id="Q83S14"/>
<dbReference type="STRING" id="198214.SF0813"/>
<dbReference type="PaxDb" id="198214-SF0813"/>
<dbReference type="GeneID" id="1023798"/>
<dbReference type="KEGG" id="sfl:SF0813"/>
<dbReference type="KEGG" id="sfx:S0855"/>
<dbReference type="PATRIC" id="fig|198214.7.peg.941"/>
<dbReference type="HOGENOM" id="CLU_014689_0_0_6"/>
<dbReference type="Proteomes" id="UP000001006">
    <property type="component" value="Chromosome"/>
</dbReference>
<dbReference type="Proteomes" id="UP000002673">
    <property type="component" value="Chromosome"/>
</dbReference>
<dbReference type="GO" id="GO:0051539">
    <property type="term" value="F:4 iron, 4 sulfur cluster binding"/>
    <property type="evidence" value="ECO:0007669"/>
    <property type="project" value="UniProtKB-KW"/>
</dbReference>
<dbReference type="GO" id="GO:0005506">
    <property type="term" value="F:iron ion binding"/>
    <property type="evidence" value="ECO:0007669"/>
    <property type="project" value="UniProtKB-UniRule"/>
</dbReference>
<dbReference type="GO" id="GO:0070041">
    <property type="term" value="F:rRNA (uridine-C5-)-methyltransferase activity"/>
    <property type="evidence" value="ECO:0007669"/>
    <property type="project" value="UniProtKB-UniRule"/>
</dbReference>
<dbReference type="GO" id="GO:0070475">
    <property type="term" value="P:rRNA base methylation"/>
    <property type="evidence" value="ECO:0007669"/>
    <property type="project" value="TreeGrafter"/>
</dbReference>
<dbReference type="CDD" id="cd02440">
    <property type="entry name" value="AdoMet_MTases"/>
    <property type="match status" value="1"/>
</dbReference>
<dbReference type="FunFam" id="2.40.50.1070:FF:000002">
    <property type="entry name" value="23S rRNA (uracil(747)-C(5))-methyltransferase RlmC"/>
    <property type="match status" value="1"/>
</dbReference>
<dbReference type="FunFam" id="3.40.50.150:FF:000049">
    <property type="entry name" value="23S rRNA (uracil(747)-C(5))-methyltransferase RlmC"/>
    <property type="match status" value="1"/>
</dbReference>
<dbReference type="Gene3D" id="2.40.50.1070">
    <property type="match status" value="1"/>
</dbReference>
<dbReference type="Gene3D" id="3.40.50.150">
    <property type="entry name" value="Vaccinia Virus protein VP39"/>
    <property type="match status" value="1"/>
</dbReference>
<dbReference type="HAMAP" id="MF_01012">
    <property type="entry name" value="23SrRNA_methyltr_RlmC"/>
    <property type="match status" value="1"/>
</dbReference>
<dbReference type="InterPro" id="IPR011825">
    <property type="entry name" value="23SrRNA_MeTrfase_RlmC"/>
</dbReference>
<dbReference type="InterPro" id="IPR030390">
    <property type="entry name" value="MeTrfase_TrmA_AS"/>
</dbReference>
<dbReference type="InterPro" id="IPR030391">
    <property type="entry name" value="MeTrfase_TrmA_CS"/>
</dbReference>
<dbReference type="InterPro" id="IPR029063">
    <property type="entry name" value="SAM-dependent_MTases_sf"/>
</dbReference>
<dbReference type="InterPro" id="IPR010280">
    <property type="entry name" value="U5_MeTrfase_fam"/>
</dbReference>
<dbReference type="NCBIfam" id="TIGR02085">
    <property type="entry name" value="meth_trns_rumB"/>
    <property type="match status" value="1"/>
</dbReference>
<dbReference type="PANTHER" id="PTHR11061">
    <property type="entry name" value="RNA M5U METHYLTRANSFERASE"/>
    <property type="match status" value="1"/>
</dbReference>
<dbReference type="PANTHER" id="PTHR11061:SF30">
    <property type="entry name" value="TRNA (URACIL(54)-C(5))-METHYLTRANSFERASE"/>
    <property type="match status" value="1"/>
</dbReference>
<dbReference type="Pfam" id="PF05958">
    <property type="entry name" value="tRNA_U5-meth_tr"/>
    <property type="match status" value="1"/>
</dbReference>
<dbReference type="SUPFAM" id="SSF53335">
    <property type="entry name" value="S-adenosyl-L-methionine-dependent methyltransferases"/>
    <property type="match status" value="1"/>
</dbReference>
<dbReference type="PROSITE" id="PS51687">
    <property type="entry name" value="SAM_MT_RNA_M5U"/>
    <property type="match status" value="1"/>
</dbReference>
<dbReference type="PROSITE" id="PS01230">
    <property type="entry name" value="TRMA_1"/>
    <property type="match status" value="1"/>
</dbReference>
<dbReference type="PROSITE" id="PS01231">
    <property type="entry name" value="TRMA_2"/>
    <property type="match status" value="1"/>
</dbReference>
<organism>
    <name type="scientific">Shigella flexneri</name>
    <dbReference type="NCBI Taxonomy" id="623"/>
    <lineage>
        <taxon>Bacteria</taxon>
        <taxon>Pseudomonadati</taxon>
        <taxon>Pseudomonadota</taxon>
        <taxon>Gammaproteobacteria</taxon>
        <taxon>Enterobacterales</taxon>
        <taxon>Enterobacteriaceae</taxon>
        <taxon>Shigella</taxon>
    </lineage>
</organism>
<accession>Q83S14</accession>
<accession>Q7C2D5</accession>
<gene>
    <name evidence="1" type="primary">rlmC</name>
    <name type="synonym">rumB</name>
    <name type="ordered locus">SF0813</name>
    <name type="ordered locus">S0855</name>
</gene>
<protein>
    <recommendedName>
        <fullName evidence="1">23S rRNA (uracil(747)-C(5))-methyltransferase RlmC</fullName>
        <ecNumber evidence="1">2.1.1.189</ecNumber>
    </recommendedName>
    <alternativeName>
        <fullName evidence="1">23S rRNA(m5U747)-methyltransferase</fullName>
    </alternativeName>
</protein>
<reference key="1">
    <citation type="journal article" date="2002" name="Nucleic Acids Res.">
        <title>Genome sequence of Shigella flexneri 2a: insights into pathogenicity through comparison with genomes of Escherichia coli K12 and O157.</title>
        <authorList>
            <person name="Jin Q."/>
            <person name="Yuan Z."/>
            <person name="Xu J."/>
            <person name="Wang Y."/>
            <person name="Shen Y."/>
            <person name="Lu W."/>
            <person name="Wang J."/>
            <person name="Liu H."/>
            <person name="Yang J."/>
            <person name="Yang F."/>
            <person name="Zhang X."/>
            <person name="Zhang J."/>
            <person name="Yang G."/>
            <person name="Wu H."/>
            <person name="Qu D."/>
            <person name="Dong J."/>
            <person name="Sun L."/>
            <person name="Xue Y."/>
            <person name="Zhao A."/>
            <person name="Gao Y."/>
            <person name="Zhu J."/>
            <person name="Kan B."/>
            <person name="Ding K."/>
            <person name="Chen S."/>
            <person name="Cheng H."/>
            <person name="Yao Z."/>
            <person name="He B."/>
            <person name="Chen R."/>
            <person name="Ma D."/>
            <person name="Qiang B."/>
            <person name="Wen Y."/>
            <person name="Hou Y."/>
            <person name="Yu J."/>
        </authorList>
    </citation>
    <scope>NUCLEOTIDE SEQUENCE [LARGE SCALE GENOMIC DNA]</scope>
    <source>
        <strain>301 / Serotype 2a</strain>
    </source>
</reference>
<reference key="2">
    <citation type="journal article" date="2003" name="Infect. Immun.">
        <title>Complete genome sequence and comparative genomics of Shigella flexneri serotype 2a strain 2457T.</title>
        <authorList>
            <person name="Wei J."/>
            <person name="Goldberg M.B."/>
            <person name="Burland V."/>
            <person name="Venkatesan M.M."/>
            <person name="Deng W."/>
            <person name="Fournier G."/>
            <person name="Mayhew G.F."/>
            <person name="Plunkett G. III"/>
            <person name="Rose D.J."/>
            <person name="Darling A."/>
            <person name="Mau B."/>
            <person name="Perna N.T."/>
            <person name="Payne S.M."/>
            <person name="Runyen-Janecky L.J."/>
            <person name="Zhou S."/>
            <person name="Schwartz D.C."/>
            <person name="Blattner F.R."/>
        </authorList>
    </citation>
    <scope>NUCLEOTIDE SEQUENCE [LARGE SCALE GENOMIC DNA]</scope>
    <source>
        <strain>ATCC 700930 / 2457T / Serotype 2a</strain>
    </source>
</reference>
<name>RLMC_SHIFL</name>
<keyword id="KW-0004">4Fe-4S</keyword>
<keyword id="KW-0408">Iron</keyword>
<keyword id="KW-0411">Iron-sulfur</keyword>
<keyword id="KW-0479">Metal-binding</keyword>
<keyword id="KW-0489">Methyltransferase</keyword>
<keyword id="KW-1185">Reference proteome</keyword>
<keyword id="KW-0698">rRNA processing</keyword>
<keyword id="KW-0949">S-adenosyl-L-methionine</keyword>
<keyword id="KW-0808">Transferase</keyword>
<comment type="function">
    <text evidence="1">Catalyzes the formation of 5-methyl-uridine at position 747 (m5U747) in 23S rRNA.</text>
</comment>
<comment type="catalytic activity">
    <reaction evidence="1">
        <text>uridine(747) in 23S rRNA + S-adenosyl-L-methionine = 5-methyluridine(747) in 23S rRNA + S-adenosyl-L-homocysteine + H(+)</text>
        <dbReference type="Rhea" id="RHEA:42628"/>
        <dbReference type="Rhea" id="RHEA-COMP:10154"/>
        <dbReference type="Rhea" id="RHEA-COMP:10155"/>
        <dbReference type="ChEBI" id="CHEBI:15378"/>
        <dbReference type="ChEBI" id="CHEBI:57856"/>
        <dbReference type="ChEBI" id="CHEBI:59789"/>
        <dbReference type="ChEBI" id="CHEBI:65315"/>
        <dbReference type="ChEBI" id="CHEBI:74447"/>
        <dbReference type="EC" id="2.1.1.189"/>
    </reaction>
</comment>
<comment type="similarity">
    <text evidence="1">Belongs to the class I-like SAM-binding methyltransferase superfamily. RNA M5U methyltransferase family. RlmC subfamily.</text>
</comment>
<evidence type="ECO:0000255" key="1">
    <source>
        <dbReference type="HAMAP-Rule" id="MF_01012"/>
    </source>
</evidence>
<feature type="chain" id="PRO_0000161937" description="23S rRNA (uracil(747)-C(5))-methyltransferase RlmC">
    <location>
        <begin position="1"/>
        <end position="375"/>
    </location>
</feature>
<feature type="active site" description="Nucleophile" evidence="1">
    <location>
        <position position="334"/>
    </location>
</feature>
<feature type="binding site" evidence="1">
    <location>
        <position position="3"/>
    </location>
    <ligand>
        <name>[4Fe-4S] cluster</name>
        <dbReference type="ChEBI" id="CHEBI:49883"/>
    </ligand>
</feature>
<feature type="binding site" evidence="1">
    <location>
        <position position="11"/>
    </location>
    <ligand>
        <name>[4Fe-4S] cluster</name>
        <dbReference type="ChEBI" id="CHEBI:49883"/>
    </ligand>
</feature>
<feature type="binding site" evidence="1">
    <location>
        <position position="14"/>
    </location>
    <ligand>
        <name>[4Fe-4S] cluster</name>
        <dbReference type="ChEBI" id="CHEBI:49883"/>
    </ligand>
</feature>
<feature type="binding site" evidence="1">
    <location>
        <position position="87"/>
    </location>
    <ligand>
        <name>[4Fe-4S] cluster</name>
        <dbReference type="ChEBI" id="CHEBI:49883"/>
    </ligand>
</feature>
<feature type="binding site" evidence="1">
    <location>
        <position position="212"/>
    </location>
    <ligand>
        <name>S-adenosyl-L-methionine</name>
        <dbReference type="ChEBI" id="CHEBI:59789"/>
    </ligand>
</feature>
<feature type="binding site" evidence="1">
    <location>
        <position position="241"/>
    </location>
    <ligand>
        <name>S-adenosyl-L-methionine</name>
        <dbReference type="ChEBI" id="CHEBI:59789"/>
    </ligand>
</feature>
<feature type="binding site" evidence="1">
    <location>
        <position position="262"/>
    </location>
    <ligand>
        <name>S-adenosyl-L-methionine</name>
        <dbReference type="ChEBI" id="CHEBI:59789"/>
    </ligand>
</feature>
<feature type="binding site" evidence="1">
    <location>
        <position position="307"/>
    </location>
    <ligand>
        <name>S-adenosyl-L-methionine</name>
        <dbReference type="ChEBI" id="CHEBI:59789"/>
    </ligand>
</feature>